<accession>B4SJT3</accession>
<proteinExistence type="inferred from homology"/>
<evidence type="ECO:0000255" key="1">
    <source>
        <dbReference type="HAMAP-Rule" id="MF_00186"/>
    </source>
</evidence>
<organism>
    <name type="scientific">Stenotrophomonas maltophilia (strain R551-3)</name>
    <dbReference type="NCBI Taxonomy" id="391008"/>
    <lineage>
        <taxon>Bacteria</taxon>
        <taxon>Pseudomonadati</taxon>
        <taxon>Pseudomonadota</taxon>
        <taxon>Gammaproteobacteria</taxon>
        <taxon>Lysobacterales</taxon>
        <taxon>Lysobacteraceae</taxon>
        <taxon>Stenotrophomonas</taxon>
        <taxon>Stenotrophomonas maltophilia group</taxon>
    </lineage>
</organism>
<reference key="1">
    <citation type="submission" date="2008-06" db="EMBL/GenBank/DDBJ databases">
        <title>Complete sequence of Stenotrophomonas maltophilia R551-3.</title>
        <authorList>
            <consortium name="US DOE Joint Genome Institute"/>
            <person name="Lucas S."/>
            <person name="Copeland A."/>
            <person name="Lapidus A."/>
            <person name="Glavina del Rio T."/>
            <person name="Dalin E."/>
            <person name="Tice H."/>
            <person name="Pitluck S."/>
            <person name="Chain P."/>
            <person name="Malfatti S."/>
            <person name="Shin M."/>
            <person name="Vergez L."/>
            <person name="Lang D."/>
            <person name="Schmutz J."/>
            <person name="Larimer F."/>
            <person name="Land M."/>
            <person name="Hauser L."/>
            <person name="Kyrpides N."/>
            <person name="Mikhailova N."/>
            <person name="Taghavi S."/>
            <person name="Monchy S."/>
            <person name="Newman L."/>
            <person name="Vangronsveld J."/>
            <person name="van der Lelie D."/>
            <person name="Richardson P."/>
        </authorList>
    </citation>
    <scope>NUCLEOTIDE SEQUENCE [LARGE SCALE GENOMIC DNA]</scope>
    <source>
        <strain>R551-3</strain>
    </source>
</reference>
<protein>
    <recommendedName>
        <fullName evidence="1">Glycerol kinase</fullName>
        <ecNumber evidence="1">2.7.1.30</ecNumber>
    </recommendedName>
    <alternativeName>
        <fullName evidence="1">ATP:glycerol 3-phosphotransferase</fullName>
    </alternativeName>
    <alternativeName>
        <fullName evidence="1">Glycerokinase</fullName>
        <shortName evidence="1">GK</shortName>
    </alternativeName>
</protein>
<sequence length="499" mass="54928">MTPRYVLAIDQGTTSSRAILFDRAGDIVGSAQREFAQIFPQPGWVEHDPREILTSVYATLTELLSRGQIDPRHIAALGITNQRETTVVWDRATGQPIHNAIVWQSRQSHTICERLKSEGHEALVRERTGLLIDAYFSATKVRWILDHVEGAQQRAERGELLFGTIDSWLVWNLSGGQAHVTDYSNAARTLLFNIHTLDWDDDLLALLDIPRAMLPQVRDSSSVYAHTRPQFFFDHPIPIAGIAGDQQAALFGQACFQPGMVKNTYGTGCFMLMHTGAQAVRSRNGLLTTIAWGLDGRVEYALEGSIFVAGSVVQWLRDGLRMIERAGDSQALAVQVPDSGGVYLVPAFVGLGAPYWRSDVRGAMFGLTRGTHKAHFVRAALEAMAYQTRDVLDAMQSDAGIALTELRADGGAIGNDFLAGFQADILGVPLLRPRLTETTALGAAYLAGLAVGFWTSREQIAAQWGLDRRFEPQMEVARREKLYAGWQQAVAATLAFHVD</sequence>
<name>GLPK_STRM5</name>
<dbReference type="EC" id="2.7.1.30" evidence="1"/>
<dbReference type="EMBL" id="CP001111">
    <property type="protein sequence ID" value="ACF53224.1"/>
    <property type="molecule type" value="Genomic_DNA"/>
</dbReference>
<dbReference type="RefSeq" id="WP_012512176.1">
    <property type="nucleotide sequence ID" value="NC_011071.1"/>
</dbReference>
<dbReference type="SMR" id="B4SJT3"/>
<dbReference type="STRING" id="391008.Smal_3525"/>
<dbReference type="KEGG" id="smt:Smal_3525"/>
<dbReference type="eggNOG" id="COG0554">
    <property type="taxonomic scope" value="Bacteria"/>
</dbReference>
<dbReference type="HOGENOM" id="CLU_009281_2_3_6"/>
<dbReference type="OrthoDB" id="9805576at2"/>
<dbReference type="UniPathway" id="UPA00618">
    <property type="reaction ID" value="UER00672"/>
</dbReference>
<dbReference type="Proteomes" id="UP000001867">
    <property type="component" value="Chromosome"/>
</dbReference>
<dbReference type="GO" id="GO:0005829">
    <property type="term" value="C:cytosol"/>
    <property type="evidence" value="ECO:0007669"/>
    <property type="project" value="TreeGrafter"/>
</dbReference>
<dbReference type="GO" id="GO:0005524">
    <property type="term" value="F:ATP binding"/>
    <property type="evidence" value="ECO:0007669"/>
    <property type="project" value="UniProtKB-UniRule"/>
</dbReference>
<dbReference type="GO" id="GO:0004370">
    <property type="term" value="F:glycerol kinase activity"/>
    <property type="evidence" value="ECO:0000250"/>
    <property type="project" value="UniProtKB"/>
</dbReference>
<dbReference type="GO" id="GO:0019563">
    <property type="term" value="P:glycerol catabolic process"/>
    <property type="evidence" value="ECO:0007669"/>
    <property type="project" value="UniProtKB-UniRule"/>
</dbReference>
<dbReference type="GO" id="GO:0006071">
    <property type="term" value="P:glycerol metabolic process"/>
    <property type="evidence" value="ECO:0000250"/>
    <property type="project" value="UniProtKB"/>
</dbReference>
<dbReference type="GO" id="GO:0006072">
    <property type="term" value="P:glycerol-3-phosphate metabolic process"/>
    <property type="evidence" value="ECO:0007669"/>
    <property type="project" value="InterPro"/>
</dbReference>
<dbReference type="CDD" id="cd07786">
    <property type="entry name" value="FGGY_EcGK_like"/>
    <property type="match status" value="1"/>
</dbReference>
<dbReference type="FunFam" id="3.30.420.40:FF:000007">
    <property type="entry name" value="Glycerol kinase"/>
    <property type="match status" value="1"/>
</dbReference>
<dbReference type="FunFam" id="3.30.420.40:FF:000008">
    <property type="entry name" value="Glycerol kinase"/>
    <property type="match status" value="1"/>
</dbReference>
<dbReference type="Gene3D" id="3.30.420.40">
    <property type="match status" value="2"/>
</dbReference>
<dbReference type="HAMAP" id="MF_00186">
    <property type="entry name" value="Glycerol_kin"/>
    <property type="match status" value="1"/>
</dbReference>
<dbReference type="InterPro" id="IPR043129">
    <property type="entry name" value="ATPase_NBD"/>
</dbReference>
<dbReference type="InterPro" id="IPR000577">
    <property type="entry name" value="Carb_kinase_FGGY"/>
</dbReference>
<dbReference type="InterPro" id="IPR018483">
    <property type="entry name" value="Carb_kinase_FGGY_CS"/>
</dbReference>
<dbReference type="InterPro" id="IPR018485">
    <property type="entry name" value="FGGY_C"/>
</dbReference>
<dbReference type="InterPro" id="IPR018484">
    <property type="entry name" value="FGGY_N"/>
</dbReference>
<dbReference type="InterPro" id="IPR005999">
    <property type="entry name" value="Glycerol_kin"/>
</dbReference>
<dbReference type="NCBIfam" id="TIGR01311">
    <property type="entry name" value="glycerol_kin"/>
    <property type="match status" value="1"/>
</dbReference>
<dbReference type="NCBIfam" id="NF000756">
    <property type="entry name" value="PRK00047.1"/>
    <property type="match status" value="1"/>
</dbReference>
<dbReference type="PANTHER" id="PTHR10196:SF69">
    <property type="entry name" value="GLYCEROL KINASE"/>
    <property type="match status" value="1"/>
</dbReference>
<dbReference type="PANTHER" id="PTHR10196">
    <property type="entry name" value="SUGAR KINASE"/>
    <property type="match status" value="1"/>
</dbReference>
<dbReference type="Pfam" id="PF02782">
    <property type="entry name" value="FGGY_C"/>
    <property type="match status" value="1"/>
</dbReference>
<dbReference type="Pfam" id="PF00370">
    <property type="entry name" value="FGGY_N"/>
    <property type="match status" value="1"/>
</dbReference>
<dbReference type="PIRSF" id="PIRSF000538">
    <property type="entry name" value="GlpK"/>
    <property type="match status" value="1"/>
</dbReference>
<dbReference type="SUPFAM" id="SSF53067">
    <property type="entry name" value="Actin-like ATPase domain"/>
    <property type="match status" value="2"/>
</dbReference>
<dbReference type="PROSITE" id="PS00933">
    <property type="entry name" value="FGGY_KINASES_1"/>
    <property type="match status" value="1"/>
</dbReference>
<dbReference type="PROSITE" id="PS00445">
    <property type="entry name" value="FGGY_KINASES_2"/>
    <property type="match status" value="1"/>
</dbReference>
<keyword id="KW-0067">ATP-binding</keyword>
<keyword id="KW-0319">Glycerol metabolism</keyword>
<keyword id="KW-0418">Kinase</keyword>
<keyword id="KW-0547">Nucleotide-binding</keyword>
<keyword id="KW-0808">Transferase</keyword>
<gene>
    <name evidence="1" type="primary">glpK</name>
    <name type="ordered locus">Smal_3525</name>
</gene>
<feature type="chain" id="PRO_1000124203" description="Glycerol kinase">
    <location>
        <begin position="1"/>
        <end position="499"/>
    </location>
</feature>
<feature type="binding site" evidence="1">
    <location>
        <position position="13"/>
    </location>
    <ligand>
        <name>ADP</name>
        <dbReference type="ChEBI" id="CHEBI:456216"/>
    </ligand>
</feature>
<feature type="binding site" evidence="1">
    <location>
        <position position="13"/>
    </location>
    <ligand>
        <name>ATP</name>
        <dbReference type="ChEBI" id="CHEBI:30616"/>
    </ligand>
</feature>
<feature type="binding site" evidence="1">
    <location>
        <position position="13"/>
    </location>
    <ligand>
        <name>sn-glycerol 3-phosphate</name>
        <dbReference type="ChEBI" id="CHEBI:57597"/>
    </ligand>
</feature>
<feature type="binding site" evidence="1">
    <location>
        <position position="14"/>
    </location>
    <ligand>
        <name>ATP</name>
        <dbReference type="ChEBI" id="CHEBI:30616"/>
    </ligand>
</feature>
<feature type="binding site" evidence="1">
    <location>
        <position position="15"/>
    </location>
    <ligand>
        <name>ATP</name>
        <dbReference type="ChEBI" id="CHEBI:30616"/>
    </ligand>
</feature>
<feature type="binding site" evidence="1">
    <location>
        <position position="17"/>
    </location>
    <ligand>
        <name>ADP</name>
        <dbReference type="ChEBI" id="CHEBI:456216"/>
    </ligand>
</feature>
<feature type="binding site" evidence="1">
    <location>
        <position position="83"/>
    </location>
    <ligand>
        <name>glycerol</name>
        <dbReference type="ChEBI" id="CHEBI:17754"/>
    </ligand>
</feature>
<feature type="binding site" evidence="1">
    <location>
        <position position="83"/>
    </location>
    <ligand>
        <name>sn-glycerol 3-phosphate</name>
        <dbReference type="ChEBI" id="CHEBI:57597"/>
    </ligand>
</feature>
<feature type="binding site" evidence="1">
    <location>
        <position position="84"/>
    </location>
    <ligand>
        <name>glycerol</name>
        <dbReference type="ChEBI" id="CHEBI:17754"/>
    </ligand>
</feature>
<feature type="binding site" evidence="1">
    <location>
        <position position="84"/>
    </location>
    <ligand>
        <name>sn-glycerol 3-phosphate</name>
        <dbReference type="ChEBI" id="CHEBI:57597"/>
    </ligand>
</feature>
<feature type="binding site" evidence="1">
    <location>
        <position position="135"/>
    </location>
    <ligand>
        <name>glycerol</name>
        <dbReference type="ChEBI" id="CHEBI:17754"/>
    </ligand>
</feature>
<feature type="binding site" evidence="1">
    <location>
        <position position="135"/>
    </location>
    <ligand>
        <name>sn-glycerol 3-phosphate</name>
        <dbReference type="ChEBI" id="CHEBI:57597"/>
    </ligand>
</feature>
<feature type="binding site" evidence="1">
    <location>
        <position position="245"/>
    </location>
    <ligand>
        <name>glycerol</name>
        <dbReference type="ChEBI" id="CHEBI:17754"/>
    </ligand>
</feature>
<feature type="binding site" evidence="1">
    <location>
        <position position="245"/>
    </location>
    <ligand>
        <name>sn-glycerol 3-phosphate</name>
        <dbReference type="ChEBI" id="CHEBI:57597"/>
    </ligand>
</feature>
<feature type="binding site" evidence="1">
    <location>
        <position position="246"/>
    </location>
    <ligand>
        <name>glycerol</name>
        <dbReference type="ChEBI" id="CHEBI:17754"/>
    </ligand>
</feature>
<feature type="binding site" evidence="1">
    <location>
        <position position="267"/>
    </location>
    <ligand>
        <name>ADP</name>
        <dbReference type="ChEBI" id="CHEBI:456216"/>
    </ligand>
</feature>
<feature type="binding site" evidence="1">
    <location>
        <position position="267"/>
    </location>
    <ligand>
        <name>ATP</name>
        <dbReference type="ChEBI" id="CHEBI:30616"/>
    </ligand>
</feature>
<feature type="binding site" evidence="1">
    <location>
        <position position="310"/>
    </location>
    <ligand>
        <name>ADP</name>
        <dbReference type="ChEBI" id="CHEBI:456216"/>
    </ligand>
</feature>
<feature type="binding site" evidence="1">
    <location>
        <position position="310"/>
    </location>
    <ligand>
        <name>ATP</name>
        <dbReference type="ChEBI" id="CHEBI:30616"/>
    </ligand>
</feature>
<feature type="binding site" evidence="1">
    <location>
        <position position="314"/>
    </location>
    <ligand>
        <name>ATP</name>
        <dbReference type="ChEBI" id="CHEBI:30616"/>
    </ligand>
</feature>
<feature type="binding site" evidence="1">
    <location>
        <position position="411"/>
    </location>
    <ligand>
        <name>ADP</name>
        <dbReference type="ChEBI" id="CHEBI:456216"/>
    </ligand>
</feature>
<feature type="binding site" evidence="1">
    <location>
        <position position="411"/>
    </location>
    <ligand>
        <name>ATP</name>
        <dbReference type="ChEBI" id="CHEBI:30616"/>
    </ligand>
</feature>
<feature type="binding site" evidence="1">
    <location>
        <position position="415"/>
    </location>
    <ligand>
        <name>ADP</name>
        <dbReference type="ChEBI" id="CHEBI:456216"/>
    </ligand>
</feature>
<comment type="function">
    <text evidence="1">Key enzyme in the regulation of glycerol uptake and metabolism. Catalyzes the phosphorylation of glycerol to yield sn-glycerol 3-phosphate.</text>
</comment>
<comment type="catalytic activity">
    <reaction evidence="1">
        <text>glycerol + ATP = sn-glycerol 3-phosphate + ADP + H(+)</text>
        <dbReference type="Rhea" id="RHEA:21644"/>
        <dbReference type="ChEBI" id="CHEBI:15378"/>
        <dbReference type="ChEBI" id="CHEBI:17754"/>
        <dbReference type="ChEBI" id="CHEBI:30616"/>
        <dbReference type="ChEBI" id="CHEBI:57597"/>
        <dbReference type="ChEBI" id="CHEBI:456216"/>
        <dbReference type="EC" id="2.7.1.30"/>
    </reaction>
</comment>
<comment type="activity regulation">
    <text evidence="1">Inhibited by fructose 1,6-bisphosphate (FBP).</text>
</comment>
<comment type="pathway">
    <text evidence="1">Polyol metabolism; glycerol degradation via glycerol kinase pathway; sn-glycerol 3-phosphate from glycerol: step 1/1.</text>
</comment>
<comment type="similarity">
    <text evidence="1">Belongs to the FGGY kinase family.</text>
</comment>